<name>RL29_STRP7</name>
<accession>C1CAM0</accession>
<dbReference type="EMBL" id="CP000918">
    <property type="protein sequence ID" value="ACO17213.1"/>
    <property type="molecule type" value="Genomic_DNA"/>
</dbReference>
<dbReference type="RefSeq" id="WP_000772918.1">
    <property type="nucleotide sequence ID" value="NC_012468.1"/>
</dbReference>
<dbReference type="SMR" id="C1CAM0"/>
<dbReference type="GeneID" id="93738965"/>
<dbReference type="KEGG" id="snm:SP70585_0273"/>
<dbReference type="HOGENOM" id="CLU_158491_5_2_9"/>
<dbReference type="Proteomes" id="UP000002211">
    <property type="component" value="Chromosome"/>
</dbReference>
<dbReference type="GO" id="GO:0022625">
    <property type="term" value="C:cytosolic large ribosomal subunit"/>
    <property type="evidence" value="ECO:0007669"/>
    <property type="project" value="TreeGrafter"/>
</dbReference>
<dbReference type="GO" id="GO:0003735">
    <property type="term" value="F:structural constituent of ribosome"/>
    <property type="evidence" value="ECO:0007669"/>
    <property type="project" value="InterPro"/>
</dbReference>
<dbReference type="GO" id="GO:0006412">
    <property type="term" value="P:translation"/>
    <property type="evidence" value="ECO:0007669"/>
    <property type="project" value="UniProtKB-UniRule"/>
</dbReference>
<dbReference type="CDD" id="cd00427">
    <property type="entry name" value="Ribosomal_L29_HIP"/>
    <property type="match status" value="1"/>
</dbReference>
<dbReference type="FunFam" id="1.10.287.310:FF:000001">
    <property type="entry name" value="50S ribosomal protein L29"/>
    <property type="match status" value="1"/>
</dbReference>
<dbReference type="Gene3D" id="1.10.287.310">
    <property type="match status" value="1"/>
</dbReference>
<dbReference type="HAMAP" id="MF_00374">
    <property type="entry name" value="Ribosomal_uL29"/>
    <property type="match status" value="1"/>
</dbReference>
<dbReference type="InterPro" id="IPR050063">
    <property type="entry name" value="Ribosomal_protein_uL29"/>
</dbReference>
<dbReference type="InterPro" id="IPR001854">
    <property type="entry name" value="Ribosomal_uL29"/>
</dbReference>
<dbReference type="InterPro" id="IPR018254">
    <property type="entry name" value="Ribosomal_uL29_CS"/>
</dbReference>
<dbReference type="InterPro" id="IPR036049">
    <property type="entry name" value="Ribosomal_uL29_sf"/>
</dbReference>
<dbReference type="NCBIfam" id="TIGR00012">
    <property type="entry name" value="L29"/>
    <property type="match status" value="1"/>
</dbReference>
<dbReference type="PANTHER" id="PTHR10916">
    <property type="entry name" value="60S RIBOSOMAL PROTEIN L35/50S RIBOSOMAL PROTEIN L29"/>
    <property type="match status" value="1"/>
</dbReference>
<dbReference type="PANTHER" id="PTHR10916:SF0">
    <property type="entry name" value="LARGE RIBOSOMAL SUBUNIT PROTEIN UL29C"/>
    <property type="match status" value="1"/>
</dbReference>
<dbReference type="Pfam" id="PF00831">
    <property type="entry name" value="Ribosomal_L29"/>
    <property type="match status" value="1"/>
</dbReference>
<dbReference type="SUPFAM" id="SSF46561">
    <property type="entry name" value="Ribosomal protein L29 (L29p)"/>
    <property type="match status" value="1"/>
</dbReference>
<dbReference type="PROSITE" id="PS00579">
    <property type="entry name" value="RIBOSOMAL_L29"/>
    <property type="match status" value="1"/>
</dbReference>
<evidence type="ECO:0000255" key="1">
    <source>
        <dbReference type="HAMAP-Rule" id="MF_00374"/>
    </source>
</evidence>
<evidence type="ECO:0000305" key="2"/>
<comment type="similarity">
    <text evidence="1">Belongs to the universal ribosomal protein uL29 family.</text>
</comment>
<protein>
    <recommendedName>
        <fullName evidence="1">Large ribosomal subunit protein uL29</fullName>
    </recommendedName>
    <alternativeName>
        <fullName evidence="2">50S ribosomal protein L29</fullName>
    </alternativeName>
</protein>
<organism>
    <name type="scientific">Streptococcus pneumoniae (strain 70585)</name>
    <dbReference type="NCBI Taxonomy" id="488221"/>
    <lineage>
        <taxon>Bacteria</taxon>
        <taxon>Bacillati</taxon>
        <taxon>Bacillota</taxon>
        <taxon>Bacilli</taxon>
        <taxon>Lactobacillales</taxon>
        <taxon>Streptococcaceae</taxon>
        <taxon>Streptococcus</taxon>
    </lineage>
</organism>
<reference key="1">
    <citation type="journal article" date="2010" name="Genome Biol.">
        <title>Structure and dynamics of the pan-genome of Streptococcus pneumoniae and closely related species.</title>
        <authorList>
            <person name="Donati C."/>
            <person name="Hiller N.L."/>
            <person name="Tettelin H."/>
            <person name="Muzzi A."/>
            <person name="Croucher N.J."/>
            <person name="Angiuoli S.V."/>
            <person name="Oggioni M."/>
            <person name="Dunning Hotopp J.C."/>
            <person name="Hu F.Z."/>
            <person name="Riley D.R."/>
            <person name="Covacci A."/>
            <person name="Mitchell T.J."/>
            <person name="Bentley S.D."/>
            <person name="Kilian M."/>
            <person name="Ehrlich G.D."/>
            <person name="Rappuoli R."/>
            <person name="Moxon E.R."/>
            <person name="Masignani V."/>
        </authorList>
    </citation>
    <scope>NUCLEOTIDE SEQUENCE [LARGE SCALE GENOMIC DNA]</scope>
    <source>
        <strain>70585</strain>
    </source>
</reference>
<feature type="chain" id="PRO_1000194034" description="Large ribosomal subunit protein uL29">
    <location>
        <begin position="1"/>
        <end position="68"/>
    </location>
</feature>
<proteinExistence type="inferred from homology"/>
<keyword id="KW-0687">Ribonucleoprotein</keyword>
<keyword id="KW-0689">Ribosomal protein</keyword>
<sequence>MKLNEVKEFVKELRGLSQEELAKRENELKKELFELRFQAATGQLEQTARLKEVKKQIARIKTVQSEAK</sequence>
<gene>
    <name evidence="1" type="primary">rpmC</name>
    <name type="ordered locus">SP70585_0273</name>
</gene>